<protein>
    <recommendedName>
        <fullName evidence="1">Protein SEY1 homolog</fullName>
        <ecNumber evidence="1">3.6.5.-</ecNumber>
    </recommendedName>
</protein>
<feature type="chain" id="PRO_0000384964" description="Protein SEY1 homolog">
    <location>
        <begin position="1"/>
        <end position="877"/>
    </location>
</feature>
<feature type="topological domain" description="Cytoplasmic" evidence="1">
    <location>
        <begin position="1"/>
        <end position="735"/>
    </location>
</feature>
<feature type="transmembrane region" description="Helical" evidence="1">
    <location>
        <begin position="736"/>
        <end position="756"/>
    </location>
</feature>
<feature type="topological domain" description="Lumenal" evidence="1">
    <location>
        <begin position="757"/>
        <end position="759"/>
    </location>
</feature>
<feature type="transmembrane region" description="Helical" evidence="1">
    <location>
        <begin position="760"/>
        <end position="780"/>
    </location>
</feature>
<feature type="topological domain" description="Cytoplasmic" evidence="1">
    <location>
        <begin position="781"/>
        <end position="877"/>
    </location>
</feature>
<feature type="domain" description="GB1/RHD3-type G" evidence="2">
    <location>
        <begin position="49"/>
        <end position="307"/>
    </location>
</feature>
<feature type="region of interest" description="Disordered" evidence="3">
    <location>
        <begin position="850"/>
        <end position="877"/>
    </location>
</feature>
<feature type="coiled-coil region" evidence="1">
    <location>
        <begin position="388"/>
        <end position="410"/>
    </location>
</feature>
<feature type="compositionally biased region" description="Basic and acidic residues" evidence="3">
    <location>
        <begin position="867"/>
        <end position="877"/>
    </location>
</feature>
<feature type="binding site" evidence="1">
    <location>
        <begin position="59"/>
        <end position="66"/>
    </location>
    <ligand>
        <name>GTP</name>
        <dbReference type="ChEBI" id="CHEBI:37565"/>
    </ligand>
</feature>
<sequence>MVAFAGGARTEDAHLIDDEGQLLPVNGIEEYLFTALGASRGGDALHRVGITYHVVGVLGGQSSGKSTLLNCLFGTKFQTMDETKRRGQTTKGAFISRANFEVLRGDDGEMDAGASALMESCAGKSLPLFVVDFEGTDGFERGEDQSFERQLSLFALSVADVLLINMWAVDVGRFNAANMSLLRTIFEVNLQLFSHDSYTKEEKPTLLVVLRDFTEVETRTHFETVRKSFDKIWDNIVKPEAFKNSTIDTLFDLRYHVLPHFKLQRAAFDKETAKFRQWFYLSTCDEYLFHTRGMFRGVPLDGIPSYLSSCWEMIRKSKDLDIPTQREMLARHRCLEVKKQILQLFTEFCSNYTERLQRGELVTHLTSLLEQDVDDKLRDFHQQTRLYRIDIVRKTEAELEEELLKVELKLVGEYAKFISSKVLEELETAVSGTVDGALRWLLHQAQSIPFLSAEAGDAGGGTEHMSHLKSVERASSNDVYITDNETCNVLVHSFWKRLCRALQAEIELLYCDFSQQHQRQRESQTLNLYDRYASLVAEDPALQEAIAHFVSDAVFQKVSRRFASMAENAAETIHQAFEGVLNRNQDGTVRFFHTTKALQRIEPQARQAGLVLLGCLLYYRVKVVADRVVYKLEDTDGLSRAAVHLLGERRKLIVRENSEEQKFFLHYATISEAPRYPIGAPVAETDSADTSDNVVDRDCVLLSQQAVQRAFDLYTQKCEFTMQLQLRSIEGEKQNLPAWVLPVLLLLGWNEIWYVLSSPVLLVVVVIIAAVFLRGFLLTQWAIFEETGPTCVVVGVRVVVQQIRNIYKALVPMMPDDVKSNVARHRDPGSFSDVTASAVGTSWPYAAAEPTVLPPSTTSATLTRRLKKEEEVPTQKE</sequence>
<proteinExistence type="inferred from homology"/>
<dbReference type="EC" id="3.6.5.-" evidence="1"/>
<dbReference type="EMBL" id="AAHK01000479">
    <property type="protein sequence ID" value="EAN91902.1"/>
    <property type="molecule type" value="Genomic_DNA"/>
</dbReference>
<dbReference type="RefSeq" id="XP_813753.1">
    <property type="nucleotide sequence ID" value="XM_808660.1"/>
</dbReference>
<dbReference type="SMR" id="Q4DHA1"/>
<dbReference type="STRING" id="353153.Q4DHA1"/>
<dbReference type="PaxDb" id="353153-Q4DHA1"/>
<dbReference type="EnsemblProtists" id="EAN91902">
    <property type="protein sequence ID" value="EAN91902"/>
    <property type="gene ID" value="Tc00.1047053511285.50"/>
</dbReference>
<dbReference type="GeneID" id="3545203"/>
<dbReference type="KEGG" id="tcr:511285.50"/>
<dbReference type="eggNOG" id="KOG2203">
    <property type="taxonomic scope" value="Eukaryota"/>
</dbReference>
<dbReference type="InParanoid" id="Q4DHA1"/>
<dbReference type="OMA" id="YHVVGVF"/>
<dbReference type="Proteomes" id="UP000002296">
    <property type="component" value="Unassembled WGS sequence"/>
</dbReference>
<dbReference type="GO" id="GO:0005789">
    <property type="term" value="C:endoplasmic reticulum membrane"/>
    <property type="evidence" value="ECO:0007669"/>
    <property type="project" value="UniProtKB-SubCell"/>
</dbReference>
<dbReference type="GO" id="GO:0005525">
    <property type="term" value="F:GTP binding"/>
    <property type="evidence" value="ECO:0007669"/>
    <property type="project" value="UniProtKB-UniRule"/>
</dbReference>
<dbReference type="GO" id="GO:0003924">
    <property type="term" value="F:GTPase activity"/>
    <property type="evidence" value="ECO:0007669"/>
    <property type="project" value="UniProtKB-UniRule"/>
</dbReference>
<dbReference type="GO" id="GO:0016320">
    <property type="term" value="P:endoplasmic reticulum membrane fusion"/>
    <property type="evidence" value="ECO:0007669"/>
    <property type="project" value="TreeGrafter"/>
</dbReference>
<dbReference type="CDD" id="cd01851">
    <property type="entry name" value="GBP"/>
    <property type="match status" value="1"/>
</dbReference>
<dbReference type="Gene3D" id="3.40.50.300">
    <property type="entry name" value="P-loop containing nucleotide triphosphate hydrolases"/>
    <property type="match status" value="1"/>
</dbReference>
<dbReference type="HAMAP" id="MF_03109">
    <property type="entry name" value="Sey1"/>
    <property type="match status" value="1"/>
</dbReference>
<dbReference type="InterPro" id="IPR030386">
    <property type="entry name" value="G_GB1_RHD3_dom"/>
</dbReference>
<dbReference type="InterPro" id="IPR027417">
    <property type="entry name" value="P-loop_NTPase"/>
</dbReference>
<dbReference type="InterPro" id="IPR008803">
    <property type="entry name" value="RHD3/Sey1"/>
</dbReference>
<dbReference type="InterPro" id="IPR046758">
    <property type="entry name" value="Sey1/RHD3-like_3HB"/>
</dbReference>
<dbReference type="PANTHER" id="PTHR45923">
    <property type="entry name" value="PROTEIN SEY1"/>
    <property type="match status" value="1"/>
</dbReference>
<dbReference type="PANTHER" id="PTHR45923:SF2">
    <property type="entry name" value="PROTEIN SEY1"/>
    <property type="match status" value="1"/>
</dbReference>
<dbReference type="Pfam" id="PF05879">
    <property type="entry name" value="RHD3_GTPase"/>
    <property type="match status" value="1"/>
</dbReference>
<dbReference type="Pfam" id="PF20428">
    <property type="entry name" value="Sey1_3HB"/>
    <property type="match status" value="1"/>
</dbReference>
<dbReference type="SUPFAM" id="SSF52540">
    <property type="entry name" value="P-loop containing nucleoside triphosphate hydrolases"/>
    <property type="match status" value="1"/>
</dbReference>
<dbReference type="PROSITE" id="PS51715">
    <property type="entry name" value="G_GB1_RHD3"/>
    <property type="match status" value="1"/>
</dbReference>
<evidence type="ECO:0000255" key="1">
    <source>
        <dbReference type="HAMAP-Rule" id="MF_03109"/>
    </source>
</evidence>
<evidence type="ECO:0000255" key="2">
    <source>
        <dbReference type="PROSITE-ProRule" id="PRU01052"/>
    </source>
</evidence>
<evidence type="ECO:0000256" key="3">
    <source>
        <dbReference type="SAM" id="MobiDB-lite"/>
    </source>
</evidence>
<comment type="function">
    <text evidence="1">Probable GTP-binding protein that may be involved in cell development.</text>
</comment>
<comment type="subcellular location">
    <subcellularLocation>
        <location evidence="1">Endoplasmic reticulum membrane</location>
        <topology evidence="1">Multi-pass membrane protein</topology>
    </subcellularLocation>
</comment>
<comment type="similarity">
    <text evidence="2">Belongs to the TRAFAC class dynamin-like GTPase superfamily. GB1/RHD3 GTPase family. RHD3 subfamily.</text>
</comment>
<gene>
    <name type="ORF">Tc00.1047053511285.50</name>
</gene>
<accession>Q4DHA1</accession>
<organism>
    <name type="scientific">Trypanosoma cruzi (strain CL Brener)</name>
    <dbReference type="NCBI Taxonomy" id="353153"/>
    <lineage>
        <taxon>Eukaryota</taxon>
        <taxon>Discoba</taxon>
        <taxon>Euglenozoa</taxon>
        <taxon>Kinetoplastea</taxon>
        <taxon>Metakinetoplastina</taxon>
        <taxon>Trypanosomatida</taxon>
        <taxon>Trypanosomatidae</taxon>
        <taxon>Trypanosoma</taxon>
        <taxon>Schizotrypanum</taxon>
    </lineage>
</organism>
<name>SEY1_TRYCC</name>
<keyword id="KW-0175">Coiled coil</keyword>
<keyword id="KW-0256">Endoplasmic reticulum</keyword>
<keyword id="KW-0342">GTP-binding</keyword>
<keyword id="KW-0378">Hydrolase</keyword>
<keyword id="KW-0472">Membrane</keyword>
<keyword id="KW-0547">Nucleotide-binding</keyword>
<keyword id="KW-1185">Reference proteome</keyword>
<keyword id="KW-0812">Transmembrane</keyword>
<keyword id="KW-1133">Transmembrane helix</keyword>
<reference key="1">
    <citation type="journal article" date="2005" name="Science">
        <title>The genome sequence of Trypanosoma cruzi, etiologic agent of Chagas disease.</title>
        <authorList>
            <person name="El-Sayed N.M.A."/>
            <person name="Myler P.J."/>
            <person name="Bartholomeu D.C."/>
            <person name="Nilsson D."/>
            <person name="Aggarwal G."/>
            <person name="Tran A.-N."/>
            <person name="Ghedin E."/>
            <person name="Worthey E.A."/>
            <person name="Delcher A.L."/>
            <person name="Blandin G."/>
            <person name="Westenberger S.J."/>
            <person name="Caler E."/>
            <person name="Cerqueira G.C."/>
            <person name="Branche C."/>
            <person name="Haas B."/>
            <person name="Anupama A."/>
            <person name="Arner E."/>
            <person name="Aslund L."/>
            <person name="Attipoe P."/>
            <person name="Bontempi E."/>
            <person name="Bringaud F."/>
            <person name="Burton P."/>
            <person name="Cadag E."/>
            <person name="Campbell D.A."/>
            <person name="Carrington M."/>
            <person name="Crabtree J."/>
            <person name="Darban H."/>
            <person name="da Silveira J.F."/>
            <person name="de Jong P."/>
            <person name="Edwards K."/>
            <person name="Englund P.T."/>
            <person name="Fazelina G."/>
            <person name="Feldblyum T."/>
            <person name="Ferella M."/>
            <person name="Frasch A.C."/>
            <person name="Gull K."/>
            <person name="Horn D."/>
            <person name="Hou L."/>
            <person name="Huang Y."/>
            <person name="Kindlund E."/>
            <person name="Klingbeil M."/>
            <person name="Kluge S."/>
            <person name="Koo H."/>
            <person name="Lacerda D."/>
            <person name="Levin M.J."/>
            <person name="Lorenzi H."/>
            <person name="Louie T."/>
            <person name="Machado C.R."/>
            <person name="McCulloch R."/>
            <person name="McKenna A."/>
            <person name="Mizuno Y."/>
            <person name="Mottram J.C."/>
            <person name="Nelson S."/>
            <person name="Ochaya S."/>
            <person name="Osoegawa K."/>
            <person name="Pai G."/>
            <person name="Parsons M."/>
            <person name="Pentony M."/>
            <person name="Pettersson U."/>
            <person name="Pop M."/>
            <person name="Ramirez J.L."/>
            <person name="Rinta J."/>
            <person name="Robertson L."/>
            <person name="Salzberg S.L."/>
            <person name="Sanchez D.O."/>
            <person name="Seyler A."/>
            <person name="Sharma R."/>
            <person name="Shetty J."/>
            <person name="Simpson A.J."/>
            <person name="Sisk E."/>
            <person name="Tammi M.T."/>
            <person name="Tarleton R."/>
            <person name="Teixeira S."/>
            <person name="Van Aken S."/>
            <person name="Vogt C."/>
            <person name="Ward P.N."/>
            <person name="Wickstead B."/>
            <person name="Wortman J."/>
            <person name="White O."/>
            <person name="Fraser C.M."/>
            <person name="Stuart K.D."/>
            <person name="Andersson B."/>
        </authorList>
    </citation>
    <scope>NUCLEOTIDE SEQUENCE [LARGE SCALE GENOMIC DNA]</scope>
    <source>
        <strain>CL Brener</strain>
    </source>
</reference>